<dbReference type="EMBL" id="AM711640">
    <property type="protein sequence ID" value="CAM98381.1"/>
    <property type="molecule type" value="Genomic_DNA"/>
</dbReference>
<dbReference type="RefSeq" id="YP_001430095.1">
    <property type="nucleotide sequence ID" value="NC_009766.1"/>
</dbReference>
<dbReference type="SMR" id="A7M953"/>
<dbReference type="GeneID" id="5536601"/>
<dbReference type="GO" id="GO:0009535">
    <property type="term" value="C:chloroplast thylakoid membrane"/>
    <property type="evidence" value="ECO:0007669"/>
    <property type="project" value="TreeGrafter"/>
</dbReference>
<dbReference type="GO" id="GO:0005886">
    <property type="term" value="C:plasma membrane"/>
    <property type="evidence" value="ECO:0007669"/>
    <property type="project" value="UniProtKB-UniRule"/>
</dbReference>
<dbReference type="GO" id="GO:0045259">
    <property type="term" value="C:proton-transporting ATP synthase complex"/>
    <property type="evidence" value="ECO:0007669"/>
    <property type="project" value="UniProtKB-KW"/>
</dbReference>
<dbReference type="GO" id="GO:0033177">
    <property type="term" value="C:proton-transporting two-sector ATPase complex, proton-transporting domain"/>
    <property type="evidence" value="ECO:0007669"/>
    <property type="project" value="InterPro"/>
</dbReference>
<dbReference type="GO" id="GO:0008289">
    <property type="term" value="F:lipid binding"/>
    <property type="evidence" value="ECO:0007669"/>
    <property type="project" value="UniProtKB-KW"/>
</dbReference>
<dbReference type="GO" id="GO:0046933">
    <property type="term" value="F:proton-transporting ATP synthase activity, rotational mechanism"/>
    <property type="evidence" value="ECO:0007669"/>
    <property type="project" value="UniProtKB-UniRule"/>
</dbReference>
<dbReference type="CDD" id="cd18183">
    <property type="entry name" value="ATP-synt_Fo_c_ATPH"/>
    <property type="match status" value="1"/>
</dbReference>
<dbReference type="FunFam" id="1.20.20.10:FF:000001">
    <property type="entry name" value="ATP synthase subunit c, chloroplastic"/>
    <property type="match status" value="1"/>
</dbReference>
<dbReference type="Gene3D" id="1.20.20.10">
    <property type="entry name" value="F1F0 ATP synthase subunit C"/>
    <property type="match status" value="1"/>
</dbReference>
<dbReference type="HAMAP" id="MF_01396">
    <property type="entry name" value="ATP_synth_c_bact"/>
    <property type="match status" value="1"/>
</dbReference>
<dbReference type="InterPro" id="IPR005953">
    <property type="entry name" value="ATP_synth_csu_bac/chlpt"/>
</dbReference>
<dbReference type="InterPro" id="IPR000454">
    <property type="entry name" value="ATP_synth_F0_csu"/>
</dbReference>
<dbReference type="InterPro" id="IPR020537">
    <property type="entry name" value="ATP_synth_F0_csu_DDCD_BS"/>
</dbReference>
<dbReference type="InterPro" id="IPR038662">
    <property type="entry name" value="ATP_synth_F0_csu_sf"/>
</dbReference>
<dbReference type="InterPro" id="IPR002379">
    <property type="entry name" value="ATPase_proteolipid_c-like_dom"/>
</dbReference>
<dbReference type="InterPro" id="IPR035921">
    <property type="entry name" value="F/V-ATP_Csub_sf"/>
</dbReference>
<dbReference type="NCBIfam" id="TIGR01260">
    <property type="entry name" value="ATP_synt_c"/>
    <property type="match status" value="1"/>
</dbReference>
<dbReference type="NCBIfam" id="NF005608">
    <property type="entry name" value="PRK07354.1"/>
    <property type="match status" value="1"/>
</dbReference>
<dbReference type="PANTHER" id="PTHR10031">
    <property type="entry name" value="ATP SYNTHASE LIPID-BINDING PROTEIN, MITOCHONDRIAL"/>
    <property type="match status" value="1"/>
</dbReference>
<dbReference type="PANTHER" id="PTHR10031:SF0">
    <property type="entry name" value="ATPASE PROTEIN 9"/>
    <property type="match status" value="1"/>
</dbReference>
<dbReference type="Pfam" id="PF00137">
    <property type="entry name" value="ATP-synt_C"/>
    <property type="match status" value="1"/>
</dbReference>
<dbReference type="PRINTS" id="PR00124">
    <property type="entry name" value="ATPASEC"/>
</dbReference>
<dbReference type="SUPFAM" id="SSF81333">
    <property type="entry name" value="F1F0 ATP synthase subunit C"/>
    <property type="match status" value="1"/>
</dbReference>
<dbReference type="PROSITE" id="PS00605">
    <property type="entry name" value="ATPASE_C"/>
    <property type="match status" value="1"/>
</dbReference>
<proteinExistence type="inferred from homology"/>
<feature type="chain" id="PRO_0000362909" description="ATP synthase subunit C, plastid">
    <location>
        <begin position="1"/>
        <end position="81"/>
    </location>
</feature>
<feature type="transmembrane region" description="Helical" evidence="1">
    <location>
        <begin position="3"/>
        <end position="23"/>
    </location>
</feature>
<feature type="transmembrane region" description="Helical" evidence="1">
    <location>
        <begin position="57"/>
        <end position="77"/>
    </location>
</feature>
<feature type="site" description="Reversibly protonated during proton transport" evidence="1">
    <location>
        <position position="61"/>
    </location>
</feature>
<reference key="1">
    <citation type="journal article" date="2007" name="BMC Plant Biol.">
        <title>Complete DNA sequences of the plastid genomes of two parasitic flowering plant species, Cuscuta reflexa and Cuscuta gronovii.</title>
        <authorList>
            <person name="Funk H.T."/>
            <person name="Berg S."/>
            <person name="Krupinska K."/>
            <person name="Maier U.-G."/>
            <person name="Krause K."/>
        </authorList>
    </citation>
    <scope>NUCLEOTIDE SEQUENCE [LARGE SCALE GENOMIC DNA]</scope>
</reference>
<comment type="function">
    <text evidence="1">F(1)F(0) ATP synthase produces ATP from ADP in the presence of a proton or sodium gradient. F-type ATPases consist of two structural domains, F(1) containing the extramembraneous catalytic core and F(0) containing the membrane proton channel, linked together by a central stalk and a peripheral stalk. During catalysis, ATP synthesis in the catalytic domain of F(1) is coupled via a rotary mechanism of the central stalk subunits to proton translocation.</text>
</comment>
<comment type="function">
    <text evidence="1">Key component of the F(0) channel; it plays a direct role in translocation across the membrane. A homomeric c-ring of between 10-14 subunits forms the central stalk rotor element with the F(1) delta and epsilon subunits.</text>
</comment>
<comment type="subunit">
    <text evidence="1">F-type ATPases have 2 components, F(1) - the catalytic core - and F(0) - the membrane proton channel. F(1) has five subunits: alpha(3), beta(3), gamma(1), delta(1), epsilon(1). F(0) has four main subunits: a(1), b(1), b'(1) and c(10-14). The alpha and beta chains form an alternating ring which encloses part of the gamma chain. F(1) is attached to F(0) by a central stalk formed by the gamma and epsilon chains, while a peripheral stalk is formed by the delta, b and b' chains.</text>
</comment>
<comment type="subcellular location">
    <subcellularLocation>
        <location evidence="2">Plastid membrane</location>
        <topology evidence="1">Multi-pass membrane protein</topology>
    </subcellularLocation>
</comment>
<comment type="similarity">
    <text evidence="1">Belongs to the ATPase C chain family.</text>
</comment>
<comment type="caution">
    <text evidence="2">Young tissue from this organism is photosynthetic and contains some thylakoids, although the photosynthetic activity does not exceed the light compensation point.</text>
</comment>
<keyword id="KW-0066">ATP synthesis</keyword>
<keyword id="KW-0138">CF(0)</keyword>
<keyword id="KW-0375">Hydrogen ion transport</keyword>
<keyword id="KW-0406">Ion transport</keyword>
<keyword id="KW-0446">Lipid-binding</keyword>
<keyword id="KW-0472">Membrane</keyword>
<keyword id="KW-0934">Plastid</keyword>
<keyword id="KW-0812">Transmembrane</keyword>
<keyword id="KW-1133">Transmembrane helix</keyword>
<keyword id="KW-0813">Transport</keyword>
<organism>
    <name type="scientific">Cuscuta reflexa</name>
    <name type="common">Southern Asian dodder</name>
    <dbReference type="NCBI Taxonomy" id="4129"/>
    <lineage>
        <taxon>Eukaryota</taxon>
        <taxon>Viridiplantae</taxon>
        <taxon>Streptophyta</taxon>
        <taxon>Embryophyta</taxon>
        <taxon>Tracheophyta</taxon>
        <taxon>Spermatophyta</taxon>
        <taxon>Magnoliopsida</taxon>
        <taxon>eudicotyledons</taxon>
        <taxon>Gunneridae</taxon>
        <taxon>Pentapetalae</taxon>
        <taxon>asterids</taxon>
        <taxon>lamiids</taxon>
        <taxon>Solanales</taxon>
        <taxon>Convolvulaceae</taxon>
        <taxon>Cuscuteae</taxon>
        <taxon>Cuscuta</taxon>
        <taxon>Cuscuta subgen. Monogynella</taxon>
    </lineage>
</organism>
<evidence type="ECO:0000255" key="1">
    <source>
        <dbReference type="HAMAP-Rule" id="MF_01396"/>
    </source>
</evidence>
<evidence type="ECO:0000305" key="2"/>
<sequence>MNPLISAASVIAAGLAVGLASIGPGVGQGTAAGQAVEGIARQPEAEGKIRGTLLLSLAFMEALTIYGLVVALALLFANPFV</sequence>
<accession>A7M953</accession>
<name>ATPH_CUSRE</name>
<geneLocation type="plastid"/>
<protein>
    <recommendedName>
        <fullName>ATP synthase subunit C, plastid</fullName>
    </recommendedName>
    <alternativeName>
        <fullName>ATP synthase F0 sector subunit C</fullName>
    </alternativeName>
    <alternativeName>
        <fullName evidence="1">ATPase subunit III</fullName>
    </alternativeName>
    <alternativeName>
        <fullName evidence="1">Lipid-binding protein</fullName>
    </alternativeName>
</protein>
<gene>
    <name evidence="1" type="primary">atpE</name>
    <name evidence="1" type="synonym">atpH</name>
</gene>